<organism>
    <name type="scientific">Oenothera elata subsp. hookeri</name>
    <name type="common">Hooker's evening primrose</name>
    <name type="synonym">Oenothera hookeri</name>
    <dbReference type="NCBI Taxonomy" id="85636"/>
    <lineage>
        <taxon>Eukaryota</taxon>
        <taxon>Viridiplantae</taxon>
        <taxon>Streptophyta</taxon>
        <taxon>Embryophyta</taxon>
        <taxon>Tracheophyta</taxon>
        <taxon>Spermatophyta</taxon>
        <taxon>Magnoliopsida</taxon>
        <taxon>eudicotyledons</taxon>
        <taxon>Gunneridae</taxon>
        <taxon>Pentapetalae</taxon>
        <taxon>rosids</taxon>
        <taxon>malvids</taxon>
        <taxon>Myrtales</taxon>
        <taxon>Onagraceae</taxon>
        <taxon>Onagroideae</taxon>
        <taxon>Onagreae</taxon>
        <taxon>Oenothera</taxon>
    </lineage>
</organism>
<proteinExistence type="inferred from homology"/>
<geneLocation type="chloroplast"/>
<name>PSBZ_OENEH</name>
<gene>
    <name evidence="1" type="primary">psbZ</name>
    <name type="synonym">ycf9</name>
</gene>
<comment type="function">
    <text evidence="1">May control the interaction of photosystem II (PSII) cores with the light-harvesting antenna, regulates electron flow through the 2 photosystem reaction centers. PSII is a light-driven water plastoquinone oxidoreductase, using light energy to abstract electrons from H(2)O, generating a proton gradient subsequently used for ATP formation.</text>
</comment>
<comment type="subunit">
    <text evidence="1">PSII is composed of 1 copy each of membrane proteins PsbA, PsbB, PsbC, PsbD, PsbE, PsbF, PsbH, PsbI, PsbJ, PsbK, PsbL, PsbM, PsbT, PsbY, PsbZ, Psb30/Ycf12, at least 3 peripheral proteins of the oxygen-evolving complex and a large number of cofactors. It forms dimeric complexes.</text>
</comment>
<comment type="subcellular location">
    <subcellularLocation>
        <location evidence="1">Plastid</location>
        <location evidence="1">Chloroplast thylakoid membrane</location>
        <topology evidence="1">Multi-pass membrane protein</topology>
    </subcellularLocation>
</comment>
<comment type="similarity">
    <text evidence="1">Belongs to the PsbZ family.</text>
</comment>
<accession>Q9MTN5</accession>
<sequence>MTIAFQLAVFALIATSSLLLISVPVVFASPEGWSSNKNVVFSGTSLWIGLVFLVGILNSLIS</sequence>
<dbReference type="EMBL" id="AJ271079">
    <property type="protein sequence ID" value="CAB67140.1"/>
    <property type="molecule type" value="Genomic_DNA"/>
</dbReference>
<dbReference type="RefSeq" id="NP_084675.1">
    <property type="nucleotide sequence ID" value="NC_002693.2"/>
</dbReference>
<dbReference type="SMR" id="Q9MTN5"/>
<dbReference type="GeneID" id="802814"/>
<dbReference type="GO" id="GO:0009535">
    <property type="term" value="C:chloroplast thylakoid membrane"/>
    <property type="evidence" value="ECO:0007669"/>
    <property type="project" value="UniProtKB-SubCell"/>
</dbReference>
<dbReference type="GO" id="GO:0009539">
    <property type="term" value="C:photosystem II reaction center"/>
    <property type="evidence" value="ECO:0007669"/>
    <property type="project" value="InterPro"/>
</dbReference>
<dbReference type="GO" id="GO:0015979">
    <property type="term" value="P:photosynthesis"/>
    <property type="evidence" value="ECO:0007669"/>
    <property type="project" value="UniProtKB-UniRule"/>
</dbReference>
<dbReference type="GO" id="GO:0042549">
    <property type="term" value="P:photosystem II stabilization"/>
    <property type="evidence" value="ECO:0007669"/>
    <property type="project" value="InterPro"/>
</dbReference>
<dbReference type="FunFam" id="1.10.287.740:FF:000001">
    <property type="entry name" value="Photosystem II reaction center protein Z"/>
    <property type="match status" value="1"/>
</dbReference>
<dbReference type="Gene3D" id="1.10.287.740">
    <property type="entry name" value="Photosystem II PsbZ, reaction centre"/>
    <property type="match status" value="1"/>
</dbReference>
<dbReference type="HAMAP" id="MF_00644">
    <property type="entry name" value="PSII_PsbZ"/>
    <property type="match status" value="1"/>
</dbReference>
<dbReference type="InterPro" id="IPR002644">
    <property type="entry name" value="PSII_PsbZ"/>
</dbReference>
<dbReference type="InterPro" id="IPR036512">
    <property type="entry name" value="PSII_PsbZ_sf"/>
</dbReference>
<dbReference type="NCBIfam" id="TIGR03043">
    <property type="entry name" value="PS_II_psbZ"/>
    <property type="match status" value="1"/>
</dbReference>
<dbReference type="PANTHER" id="PTHR34971">
    <property type="entry name" value="PHOTOSYSTEM II REACTION CENTER PROTEIN Z"/>
    <property type="match status" value="1"/>
</dbReference>
<dbReference type="PANTHER" id="PTHR34971:SF2">
    <property type="entry name" value="PHOTOSYSTEM II REACTION CENTER PROTEIN Z"/>
    <property type="match status" value="1"/>
</dbReference>
<dbReference type="Pfam" id="PF01737">
    <property type="entry name" value="Ycf9"/>
    <property type="match status" value="1"/>
</dbReference>
<dbReference type="SUPFAM" id="SSF161055">
    <property type="entry name" value="PsbZ-like"/>
    <property type="match status" value="1"/>
</dbReference>
<reference key="1">
    <citation type="journal article" date="2000" name="Mol. Gen. Genet.">
        <title>Complete nucleotide sequence of the Oenothera elata plastid chromosome, representing plastome I of the five distinguishable Euoenothera plastomes.</title>
        <authorList>
            <person name="Hupfer H."/>
            <person name="Swiatek M."/>
            <person name="Hornung S."/>
            <person name="Herrmann R.G."/>
            <person name="Maier R.M."/>
            <person name="Chiu W.-L."/>
            <person name="Sears B."/>
        </authorList>
    </citation>
    <scope>NUCLEOTIDE SEQUENCE [LARGE SCALE GENOMIC DNA]</scope>
    <source>
        <strain>cv. Johansen</strain>
    </source>
</reference>
<protein>
    <recommendedName>
        <fullName evidence="1">Photosystem II reaction center protein Z</fullName>
        <shortName evidence="1">PSII-Z</shortName>
    </recommendedName>
</protein>
<evidence type="ECO:0000255" key="1">
    <source>
        <dbReference type="HAMAP-Rule" id="MF_00644"/>
    </source>
</evidence>
<keyword id="KW-0150">Chloroplast</keyword>
<keyword id="KW-0472">Membrane</keyword>
<keyword id="KW-0602">Photosynthesis</keyword>
<keyword id="KW-0604">Photosystem II</keyword>
<keyword id="KW-0934">Plastid</keyword>
<keyword id="KW-0674">Reaction center</keyword>
<keyword id="KW-0793">Thylakoid</keyword>
<keyword id="KW-0812">Transmembrane</keyword>
<keyword id="KW-1133">Transmembrane helix</keyword>
<feature type="chain" id="PRO_0000217718" description="Photosystem II reaction center protein Z">
    <location>
        <begin position="1"/>
        <end position="62"/>
    </location>
</feature>
<feature type="transmembrane region" description="Helical" evidence="1">
    <location>
        <begin position="8"/>
        <end position="28"/>
    </location>
</feature>
<feature type="transmembrane region" description="Helical" evidence="1">
    <location>
        <begin position="41"/>
        <end position="61"/>
    </location>
</feature>